<sequence>MMTGQVPILVLKEGTQREQGKNAQRNNIEAAKAIADAVRTTLGPKGMDKMLVDSIGDIIISNDGATILKEMDVEHPTAKMIVEVSKAQDTAVGDGTTTAVVLSGELLKQAETLLDQGVHPTVISNGYRLAVNEARKIIDEIAEKSTDDATLRKIALTALSGKNTGLSNDFLADLVVKAVNAVAEVRDGKTIVDTANIKVDKKNGGSVNDTQFISGIVIDKEKVHSKMPDVVKNAKIALIDSALEIKKTEIEAKVQISDPSKIQDFLNQETNTFKQMVEKIKKSGANVVLCQKGIDDVAQHYLAKEGIYAVRRVKKSDMEKLAKATGAKIVTDLDDLTPSVLGEAETVEERKIGDDRMTFVMGCKNPKAVSILIRGGTDHVVSEVERALNDAIRVVAITKEDGKFLWGGGAVEAELAMRLAKYANSVGGREQLAIEAFAKALEIIPRTLAENAGIDPINTLIKLKAEHEKGRISVGVDLDNNGVGDMKAKGVVDPLRVKTHALESAVEVATMILRIDDVIASKKSTPPSGQGGQGQGMPGGGMPEY</sequence>
<accession>P48424</accession>
<comment type="function">
    <text>Molecular chaperone; binds unfolded polypeptides in vitro, and has a weak ATPase activity.</text>
</comment>
<comment type="subunit">
    <text>Forms a Heterooligomeric complex of two stacked eight-membered rings.</text>
</comment>
<comment type="PTM">
    <text>The N-terminus is blocked.</text>
</comment>
<comment type="similarity">
    <text evidence="2">Belongs to the TCP-1 chaperonin family.</text>
</comment>
<comment type="sequence caution" evidence="2">
    <conflict type="erroneous initiation">
        <sequence resource="EMBL-CDS" id="CAC12109"/>
    </conflict>
</comment>
<gene>
    <name type="primary">thsA</name>
    <name type="ordered locus">Ta0980</name>
</gene>
<keyword id="KW-0002">3D-structure</keyword>
<keyword id="KW-0067">ATP-binding</keyword>
<keyword id="KW-0143">Chaperone</keyword>
<keyword id="KW-0903">Direct protein sequencing</keyword>
<keyword id="KW-0547">Nucleotide-binding</keyword>
<keyword id="KW-1185">Reference proteome</keyword>
<reference key="1">
    <citation type="journal article" date="1995" name="Biol. Chem. Hoppe-Seyler">
        <title>Primary structure of the thermosome from Thermoplasma acidophilum.</title>
        <authorList>
            <person name="Waldmann T."/>
            <person name="Lupas A.N."/>
            <person name="Kellermann J."/>
            <person name="Peters J."/>
            <person name="Baumeister W."/>
        </authorList>
    </citation>
    <scope>NUCLEOTIDE SEQUENCE [GENOMIC DNA]</scope>
    <scope>PROTEIN SEQUENCE OF 88-97 AND 427-436</scope>
    <source>
        <strain>ATCC 25905 / DSM 1728 / JCM 9062 / NBRC 15155 / AMRC-C165</strain>
    </source>
</reference>
<reference key="2">
    <citation type="journal article" date="2000" name="Nature">
        <title>The genome sequence of the thermoacidophilic scavenger Thermoplasma acidophilum.</title>
        <authorList>
            <person name="Ruepp A."/>
            <person name="Graml W."/>
            <person name="Santos-Martinez M.-L."/>
            <person name="Koretke K.K."/>
            <person name="Volker C."/>
            <person name="Mewes H.-W."/>
            <person name="Frishman D."/>
            <person name="Stocker S."/>
            <person name="Lupas A.N."/>
            <person name="Baumeister W."/>
        </authorList>
    </citation>
    <scope>NUCLEOTIDE SEQUENCE [LARGE SCALE GENOMIC DNA]</scope>
    <source>
        <strain>ATCC 25905 / DSM 1728 / JCM 9062 / NBRC 15155 / AMRC-C165</strain>
    </source>
</reference>
<reference key="3">
    <citation type="journal article" date="1995" name="Eur. J. Biochem.">
        <title>The thermosome of Thermoplasma acidophilum and its relationship to the eukaryotic chaperonin TRiC.</title>
        <authorList>
            <person name="Waldmann T."/>
            <person name="Nimmesgern E."/>
            <person name="Nitsch M."/>
            <person name="Peters J."/>
            <person name="Pfeifer G."/>
            <person name="Mueller S."/>
            <person name="Kellermann J."/>
            <person name="Engel A."/>
            <person name="Hartl F.-U."/>
            <person name="Baumeister W."/>
        </authorList>
    </citation>
    <scope>PROTEIN SEQUENCE OF 80-114 AND 420-444</scope>
    <source>
        <strain>ATCC 25905 / DSM 1728 / JCM 9062 / NBRC 15155 / AMRC-C165</strain>
    </source>
</reference>
<reference key="4">
    <citation type="journal article" date="1997" name="Cell">
        <title>Structure of the substrate binding domain of the thermosome, an archaeal group II chaperonin.</title>
        <authorList>
            <person name="Klumpp M."/>
            <person name="Baumeister W."/>
            <person name="Essen L.-O."/>
        </authorList>
    </citation>
    <scope>X-RAY CRYSTALLOGRAPHY (2.3 ANGSTROMS) OF 213-364</scope>
</reference>
<reference key="5">
    <citation type="journal article" date="1998" name="Cell">
        <title>Crystal structure of the thermosome, the archaeal chaperonin and homolog of CCT.</title>
        <authorList>
            <person name="Ditzel L."/>
            <person name="Loewe J."/>
            <person name="Stock D."/>
            <person name="Stetter K.-O."/>
            <person name="Huber H."/>
            <person name="Huber R."/>
            <person name="Steinbacher S."/>
        </authorList>
    </citation>
    <scope>X-RAY CRYSTALLOGRAPHY (2.6 ANGSTROMS)</scope>
</reference>
<feature type="chain" id="PRO_0000128409" description="Thermosome subunit alpha">
    <location>
        <begin position="1"/>
        <end position="545"/>
    </location>
</feature>
<feature type="region of interest" description="Disordered" evidence="1">
    <location>
        <begin position="522"/>
        <end position="545"/>
    </location>
</feature>
<feature type="compositionally biased region" description="Gly residues" evidence="1">
    <location>
        <begin position="529"/>
        <end position="545"/>
    </location>
</feature>
<feature type="helix" evidence="3">
    <location>
        <begin position="20"/>
        <end position="39"/>
    </location>
</feature>
<feature type="strand" evidence="3">
    <location>
        <begin position="48"/>
        <end position="52"/>
    </location>
</feature>
<feature type="strand" evidence="3">
    <location>
        <begin position="54"/>
        <end position="56"/>
    </location>
</feature>
<feature type="strand" evidence="3">
    <location>
        <begin position="58"/>
        <end position="61"/>
    </location>
</feature>
<feature type="helix" evidence="3">
    <location>
        <begin position="64"/>
        <end position="70"/>
    </location>
</feature>
<feature type="helix" evidence="3">
    <location>
        <begin position="76"/>
        <end position="82"/>
    </location>
</feature>
<feature type="helix" evidence="3">
    <location>
        <begin position="83"/>
        <end position="86"/>
    </location>
</feature>
<feature type="turn" evidence="3">
    <location>
        <begin position="88"/>
        <end position="90"/>
    </location>
</feature>
<feature type="helix" evidence="3">
    <location>
        <begin position="95"/>
        <end position="116"/>
    </location>
</feature>
<feature type="helix" evidence="3">
    <location>
        <begin position="120"/>
        <end position="141"/>
    </location>
</feature>
<feature type="helix" evidence="3">
    <location>
        <begin position="148"/>
        <end position="158"/>
    </location>
</feature>
<feature type="turn" evidence="3">
    <location>
        <begin position="159"/>
        <end position="161"/>
    </location>
</feature>
<feature type="helix" evidence="3">
    <location>
        <begin position="168"/>
        <end position="182"/>
    </location>
</feature>
<feature type="strand" evidence="3">
    <location>
        <begin position="184"/>
        <end position="191"/>
    </location>
</feature>
<feature type="helix" evidence="3">
    <location>
        <begin position="194"/>
        <end position="196"/>
    </location>
</feature>
<feature type="strand" evidence="3">
    <location>
        <begin position="197"/>
        <end position="201"/>
    </location>
</feature>
<feature type="strand" evidence="4">
    <location>
        <begin position="216"/>
        <end position="219"/>
    </location>
</feature>
<feature type="strand" evidence="4">
    <location>
        <begin position="229"/>
        <end position="241"/>
    </location>
</feature>
<feature type="helix" evidence="4">
    <location>
        <begin position="247"/>
        <end position="255"/>
    </location>
</feature>
<feature type="helix" evidence="4">
    <location>
        <begin position="259"/>
        <end position="261"/>
    </location>
</feature>
<feature type="helix" evidence="4">
    <location>
        <begin position="262"/>
        <end position="282"/>
    </location>
</feature>
<feature type="strand" evidence="4">
    <location>
        <begin position="286"/>
        <end position="292"/>
    </location>
</feature>
<feature type="helix" evidence="4">
    <location>
        <begin position="296"/>
        <end position="304"/>
    </location>
</feature>
<feature type="strand" evidence="4">
    <location>
        <begin position="308"/>
        <end position="310"/>
    </location>
</feature>
<feature type="helix" evidence="4">
    <location>
        <begin position="315"/>
        <end position="325"/>
    </location>
</feature>
<feature type="strand" evidence="4">
    <location>
        <begin position="330"/>
        <end position="332"/>
    </location>
</feature>
<feature type="helix" evidence="3">
    <location>
        <begin position="333"/>
        <end position="335"/>
    </location>
</feature>
<feature type="helix" evidence="3">
    <location>
        <begin position="338"/>
        <end position="340"/>
    </location>
</feature>
<feature type="strand" evidence="4">
    <location>
        <begin position="342"/>
        <end position="352"/>
    </location>
</feature>
<feature type="strand" evidence="4">
    <location>
        <begin position="355"/>
        <end position="362"/>
    </location>
</feature>
<feature type="strand" evidence="3">
    <location>
        <begin position="369"/>
        <end position="373"/>
    </location>
</feature>
<feature type="strand" evidence="3">
    <location>
        <begin position="376"/>
        <end position="378"/>
    </location>
</feature>
<feature type="helix" evidence="3">
    <location>
        <begin position="381"/>
        <end position="401"/>
    </location>
</feature>
<feature type="strand" evidence="3">
    <location>
        <begin position="403"/>
        <end position="406"/>
    </location>
</feature>
<feature type="turn" evidence="3">
    <location>
        <begin position="407"/>
        <end position="409"/>
    </location>
</feature>
<feature type="helix" evidence="3">
    <location>
        <begin position="410"/>
        <end position="424"/>
    </location>
</feature>
<feature type="helix" evidence="3">
    <location>
        <begin position="428"/>
        <end position="441"/>
    </location>
</feature>
<feature type="helix" evidence="3">
    <location>
        <begin position="443"/>
        <end position="452"/>
    </location>
</feature>
<feature type="helix" evidence="3">
    <location>
        <begin position="456"/>
        <end position="468"/>
    </location>
</feature>
<feature type="strand" evidence="3">
    <location>
        <begin position="474"/>
        <end position="477"/>
    </location>
</feature>
<feature type="turn" evidence="3">
    <location>
        <begin position="478"/>
        <end position="481"/>
    </location>
</feature>
<feature type="strand" evidence="3">
    <location>
        <begin position="482"/>
        <end position="485"/>
    </location>
</feature>
<feature type="helix" evidence="3">
    <location>
        <begin position="486"/>
        <end position="489"/>
    </location>
</feature>
<feature type="strand" evidence="3">
    <location>
        <begin position="492"/>
        <end position="494"/>
    </location>
</feature>
<feature type="helix" evidence="3">
    <location>
        <begin position="495"/>
        <end position="513"/>
    </location>
</feature>
<dbReference type="EMBL" id="Z46649">
    <property type="protein sequence ID" value="CAA86610.1"/>
    <property type="molecule type" value="Genomic_DNA"/>
</dbReference>
<dbReference type="EMBL" id="AL445066">
    <property type="protein sequence ID" value="CAC12109.1"/>
    <property type="status" value="ALT_INIT"/>
    <property type="molecule type" value="Genomic_DNA"/>
</dbReference>
<dbReference type="PIR" id="S53816">
    <property type="entry name" value="S53816"/>
</dbReference>
<dbReference type="RefSeq" id="WP_048161900.1">
    <property type="nucleotide sequence ID" value="NC_002578.1"/>
</dbReference>
<dbReference type="PDB" id="1A6D">
    <property type="method" value="X-ray"/>
    <property type="resolution" value="2.60 A"/>
    <property type="chains" value="A=1-545"/>
</dbReference>
<dbReference type="PDB" id="1A6E">
    <property type="method" value="X-ray"/>
    <property type="resolution" value="3.20 A"/>
    <property type="chains" value="A=1-545"/>
</dbReference>
<dbReference type="PDB" id="1ASS">
    <property type="method" value="X-ray"/>
    <property type="resolution" value="2.30 A"/>
    <property type="chains" value="A=214-365"/>
</dbReference>
<dbReference type="PDB" id="1ASX">
    <property type="method" value="X-ray"/>
    <property type="resolution" value="2.80 A"/>
    <property type="chains" value="A=214-365"/>
</dbReference>
<dbReference type="PDBsum" id="1A6D"/>
<dbReference type="PDBsum" id="1A6E"/>
<dbReference type="PDBsum" id="1ASS"/>
<dbReference type="PDBsum" id="1ASX"/>
<dbReference type="BMRB" id="P48424"/>
<dbReference type="SMR" id="P48424"/>
<dbReference type="FunCoup" id="P48424">
    <property type="interactions" value="195"/>
</dbReference>
<dbReference type="MINT" id="P48424"/>
<dbReference type="STRING" id="273075.gene:9572198"/>
<dbReference type="PaxDb" id="273075-Ta0980"/>
<dbReference type="EnsemblBacteria" id="CAC12109">
    <property type="protein sequence ID" value="CAC12109"/>
    <property type="gene ID" value="CAC12109"/>
</dbReference>
<dbReference type="KEGG" id="tac:Ta0980"/>
<dbReference type="eggNOG" id="arCOG01257">
    <property type="taxonomic scope" value="Archaea"/>
</dbReference>
<dbReference type="HOGENOM" id="CLU_008891_7_3_2"/>
<dbReference type="InParanoid" id="P48424"/>
<dbReference type="OrthoDB" id="9362at2157"/>
<dbReference type="BRENDA" id="3.6.4.B10">
    <property type="organism ID" value="6324"/>
</dbReference>
<dbReference type="BRENDA" id="5.6.1.7">
    <property type="organism ID" value="6324"/>
</dbReference>
<dbReference type="EvolutionaryTrace" id="P48424"/>
<dbReference type="Proteomes" id="UP000001024">
    <property type="component" value="Chromosome"/>
</dbReference>
<dbReference type="GO" id="GO:0005524">
    <property type="term" value="F:ATP binding"/>
    <property type="evidence" value="ECO:0007669"/>
    <property type="project" value="UniProtKB-KW"/>
</dbReference>
<dbReference type="GO" id="GO:0016887">
    <property type="term" value="F:ATP hydrolysis activity"/>
    <property type="evidence" value="ECO:0007669"/>
    <property type="project" value="InterPro"/>
</dbReference>
<dbReference type="GO" id="GO:0140662">
    <property type="term" value="F:ATP-dependent protein folding chaperone"/>
    <property type="evidence" value="ECO:0007669"/>
    <property type="project" value="InterPro"/>
</dbReference>
<dbReference type="GO" id="GO:0051082">
    <property type="term" value="F:unfolded protein binding"/>
    <property type="evidence" value="ECO:0007669"/>
    <property type="project" value="InterPro"/>
</dbReference>
<dbReference type="CDD" id="cd03343">
    <property type="entry name" value="cpn60"/>
    <property type="match status" value="1"/>
</dbReference>
<dbReference type="Gene3D" id="3.50.7.10">
    <property type="entry name" value="GroEL"/>
    <property type="match status" value="1"/>
</dbReference>
<dbReference type="Gene3D" id="1.10.560.10">
    <property type="entry name" value="GroEL-like equatorial domain"/>
    <property type="match status" value="1"/>
</dbReference>
<dbReference type="Gene3D" id="3.30.260.10">
    <property type="entry name" value="TCP-1-like chaperonin intermediate domain"/>
    <property type="match status" value="1"/>
</dbReference>
<dbReference type="InterPro" id="IPR017998">
    <property type="entry name" value="Chaperone_TCP-1"/>
</dbReference>
<dbReference type="InterPro" id="IPR002194">
    <property type="entry name" value="Chaperonin_TCP-1_CS"/>
</dbReference>
<dbReference type="InterPro" id="IPR002423">
    <property type="entry name" value="Cpn60/GroEL/TCP-1"/>
</dbReference>
<dbReference type="InterPro" id="IPR027409">
    <property type="entry name" value="GroEL-like_apical_dom_sf"/>
</dbReference>
<dbReference type="InterPro" id="IPR027413">
    <property type="entry name" value="GROEL-like_equatorial_sf"/>
</dbReference>
<dbReference type="InterPro" id="IPR027410">
    <property type="entry name" value="TCP-1-like_intermed_sf"/>
</dbReference>
<dbReference type="InterPro" id="IPR053374">
    <property type="entry name" value="TCP-1_chaperonin"/>
</dbReference>
<dbReference type="InterPro" id="IPR054827">
    <property type="entry name" value="thermosome_alpha"/>
</dbReference>
<dbReference type="InterPro" id="IPR012714">
    <property type="entry name" value="Thermosome_arc"/>
</dbReference>
<dbReference type="NCBIfam" id="NF041082">
    <property type="entry name" value="thermosome_alpha"/>
    <property type="match status" value="1"/>
</dbReference>
<dbReference type="NCBIfam" id="TIGR02339">
    <property type="entry name" value="thermosome_arch"/>
    <property type="match status" value="1"/>
</dbReference>
<dbReference type="NCBIfam" id="NF041083">
    <property type="entry name" value="thermosome_beta"/>
    <property type="match status" value="1"/>
</dbReference>
<dbReference type="PANTHER" id="PTHR11353">
    <property type="entry name" value="CHAPERONIN"/>
    <property type="match status" value="1"/>
</dbReference>
<dbReference type="Pfam" id="PF00118">
    <property type="entry name" value="Cpn60_TCP1"/>
    <property type="match status" value="1"/>
</dbReference>
<dbReference type="PRINTS" id="PR00304">
    <property type="entry name" value="TCOMPLEXTCP1"/>
</dbReference>
<dbReference type="SUPFAM" id="SSF52029">
    <property type="entry name" value="GroEL apical domain-like"/>
    <property type="match status" value="1"/>
</dbReference>
<dbReference type="SUPFAM" id="SSF48592">
    <property type="entry name" value="GroEL equatorial domain-like"/>
    <property type="match status" value="1"/>
</dbReference>
<dbReference type="SUPFAM" id="SSF54849">
    <property type="entry name" value="GroEL-intermediate domain like"/>
    <property type="match status" value="1"/>
</dbReference>
<dbReference type="PROSITE" id="PS00750">
    <property type="entry name" value="TCP1_1"/>
    <property type="match status" value="1"/>
</dbReference>
<dbReference type="PROSITE" id="PS00751">
    <property type="entry name" value="TCP1_2"/>
    <property type="match status" value="1"/>
</dbReference>
<dbReference type="PROSITE" id="PS00995">
    <property type="entry name" value="TCP1_3"/>
    <property type="match status" value="1"/>
</dbReference>
<organism>
    <name type="scientific">Thermoplasma acidophilum (strain ATCC 25905 / DSM 1728 / JCM 9062 / NBRC 15155 / AMRC-C165)</name>
    <dbReference type="NCBI Taxonomy" id="273075"/>
    <lineage>
        <taxon>Archaea</taxon>
        <taxon>Methanobacteriati</taxon>
        <taxon>Thermoplasmatota</taxon>
        <taxon>Thermoplasmata</taxon>
        <taxon>Thermoplasmatales</taxon>
        <taxon>Thermoplasmataceae</taxon>
        <taxon>Thermoplasma</taxon>
    </lineage>
</organism>
<evidence type="ECO:0000256" key="1">
    <source>
        <dbReference type="SAM" id="MobiDB-lite"/>
    </source>
</evidence>
<evidence type="ECO:0000305" key="2"/>
<evidence type="ECO:0007829" key="3">
    <source>
        <dbReference type="PDB" id="1A6D"/>
    </source>
</evidence>
<evidence type="ECO:0007829" key="4">
    <source>
        <dbReference type="PDB" id="1ASS"/>
    </source>
</evidence>
<protein>
    <recommendedName>
        <fullName>Thermosome subunit alpha</fullName>
    </recommendedName>
    <alternativeName>
        <fullName>Chaperonin subunit alpha</fullName>
    </alternativeName>
    <alternativeName>
        <fullName>Thermosome subunit 1</fullName>
    </alternativeName>
</protein>
<proteinExistence type="evidence at protein level"/>
<name>THSA_THEAC</name>